<reference key="1">
    <citation type="journal article" date="2007" name="Genome Res.">
        <title>Genome characteristics of facultatively symbiotic Frankia sp. strains reflect host range and host plant biogeography.</title>
        <authorList>
            <person name="Normand P."/>
            <person name="Lapierre P."/>
            <person name="Tisa L.S."/>
            <person name="Gogarten J.P."/>
            <person name="Alloisio N."/>
            <person name="Bagnarol E."/>
            <person name="Bassi C.A."/>
            <person name="Berry A.M."/>
            <person name="Bickhart D.M."/>
            <person name="Choisne N."/>
            <person name="Couloux A."/>
            <person name="Cournoyer B."/>
            <person name="Cruveiller S."/>
            <person name="Daubin V."/>
            <person name="Demange N."/>
            <person name="Francino M.P."/>
            <person name="Goltsman E."/>
            <person name="Huang Y."/>
            <person name="Kopp O.R."/>
            <person name="Labarre L."/>
            <person name="Lapidus A."/>
            <person name="Lavire C."/>
            <person name="Marechal J."/>
            <person name="Martinez M."/>
            <person name="Mastronunzio J.E."/>
            <person name="Mullin B.C."/>
            <person name="Niemann J."/>
            <person name="Pujic P."/>
            <person name="Rawnsley T."/>
            <person name="Rouy Z."/>
            <person name="Schenowitz C."/>
            <person name="Sellstedt A."/>
            <person name="Tavares F."/>
            <person name="Tomkins J.P."/>
            <person name="Vallenet D."/>
            <person name="Valverde C."/>
            <person name="Wall L.G."/>
            <person name="Wang Y."/>
            <person name="Medigue C."/>
            <person name="Benson D.R."/>
        </authorList>
    </citation>
    <scope>NUCLEOTIDE SEQUENCE [LARGE SCALE GENOMIC DNA]</scope>
    <source>
        <strain>EAN1pec</strain>
    </source>
</reference>
<sequence>MPELPEVEVVRRGLERGVVGRTVAEVEVHHLRAVRRHLAGADHFAASLVGQTVATARRRGKYLWLGLTPSEPGGPAVGDALLGHLGMSGQLLVVPADSPDQVHLRVRFRFTDEGRELRFVDQRTFGGLAVVSGGAELPAPIAHIAPDPLSVDFDPERFADALRRRRTGLKRALLDQTLISGVGNIYADEGLWAARLHYARPTETVTRAEALRLLDAVRTVMTAALAAGGTSFDRLYVSTEGVSGLFERSLEVYGRGGQACSRCASTIRRDAFMNRSSFSCPACQPRPRRVR</sequence>
<proteinExistence type="inferred from homology"/>
<protein>
    <recommendedName>
        <fullName evidence="2">Formamidopyrimidine-DNA glycosylase</fullName>
        <shortName evidence="2">Fapy-DNA glycosylase</shortName>
        <ecNumber evidence="2">3.2.2.23</ecNumber>
    </recommendedName>
    <alternativeName>
        <fullName evidence="2">DNA-(apurinic or apyrimidinic site) lyase MutM</fullName>
        <shortName evidence="2">AP lyase MutM</shortName>
        <ecNumber evidence="2">4.2.99.18</ecNumber>
    </alternativeName>
</protein>
<gene>
    <name evidence="2" type="primary">mutM</name>
    <name evidence="2" type="synonym">fpg</name>
    <name type="ordered locus">Franean1_1140</name>
</gene>
<accession>A8L594</accession>
<feature type="initiator methionine" description="Removed" evidence="1">
    <location>
        <position position="1"/>
    </location>
</feature>
<feature type="chain" id="PRO_1000094047" description="Formamidopyrimidine-DNA glycosylase">
    <location>
        <begin position="2"/>
        <end position="291"/>
    </location>
</feature>
<feature type="zinc finger region" description="FPG-type" evidence="2">
    <location>
        <begin position="251"/>
        <end position="285"/>
    </location>
</feature>
<feature type="active site" description="Schiff-base intermediate with DNA" evidence="2">
    <location>
        <position position="2"/>
    </location>
</feature>
<feature type="active site" description="Proton donor" evidence="2">
    <location>
        <position position="3"/>
    </location>
</feature>
<feature type="active site" description="Proton donor; for beta-elimination activity" evidence="2">
    <location>
        <position position="61"/>
    </location>
</feature>
<feature type="active site" description="Proton donor; for delta-elimination activity" evidence="2">
    <location>
        <position position="275"/>
    </location>
</feature>
<feature type="binding site" evidence="2">
    <location>
        <position position="103"/>
    </location>
    <ligand>
        <name>DNA</name>
        <dbReference type="ChEBI" id="CHEBI:16991"/>
    </ligand>
</feature>
<feature type="binding site" evidence="2">
    <location>
        <position position="123"/>
    </location>
    <ligand>
        <name>DNA</name>
        <dbReference type="ChEBI" id="CHEBI:16991"/>
    </ligand>
</feature>
<feature type="binding site" evidence="2">
    <location>
        <position position="165"/>
    </location>
    <ligand>
        <name>DNA</name>
        <dbReference type="ChEBI" id="CHEBI:16991"/>
    </ligand>
</feature>
<evidence type="ECO:0000250" key="1"/>
<evidence type="ECO:0000255" key="2">
    <source>
        <dbReference type="HAMAP-Rule" id="MF_00103"/>
    </source>
</evidence>
<dbReference type="EC" id="3.2.2.23" evidence="2"/>
<dbReference type="EC" id="4.2.99.18" evidence="2"/>
<dbReference type="EMBL" id="CP000820">
    <property type="protein sequence ID" value="ABW10594.1"/>
    <property type="molecule type" value="Genomic_DNA"/>
</dbReference>
<dbReference type="RefSeq" id="WP_020458773.1">
    <property type="nucleotide sequence ID" value="NC_009921.1"/>
</dbReference>
<dbReference type="SMR" id="A8L594"/>
<dbReference type="STRING" id="298653.Franean1_1140"/>
<dbReference type="KEGG" id="fre:Franean1_1140"/>
<dbReference type="eggNOG" id="COG0266">
    <property type="taxonomic scope" value="Bacteria"/>
</dbReference>
<dbReference type="HOGENOM" id="CLU_038423_1_2_11"/>
<dbReference type="GO" id="GO:0034039">
    <property type="term" value="F:8-oxo-7,8-dihydroguanine DNA N-glycosylase activity"/>
    <property type="evidence" value="ECO:0007669"/>
    <property type="project" value="TreeGrafter"/>
</dbReference>
<dbReference type="GO" id="GO:0140078">
    <property type="term" value="F:class I DNA-(apurinic or apyrimidinic site) endonuclease activity"/>
    <property type="evidence" value="ECO:0007669"/>
    <property type="project" value="UniProtKB-EC"/>
</dbReference>
<dbReference type="GO" id="GO:0003684">
    <property type="term" value="F:damaged DNA binding"/>
    <property type="evidence" value="ECO:0007669"/>
    <property type="project" value="InterPro"/>
</dbReference>
<dbReference type="GO" id="GO:0008270">
    <property type="term" value="F:zinc ion binding"/>
    <property type="evidence" value="ECO:0007669"/>
    <property type="project" value="UniProtKB-UniRule"/>
</dbReference>
<dbReference type="GO" id="GO:0006284">
    <property type="term" value="P:base-excision repair"/>
    <property type="evidence" value="ECO:0007669"/>
    <property type="project" value="InterPro"/>
</dbReference>
<dbReference type="CDD" id="cd08966">
    <property type="entry name" value="EcFpg-like_N"/>
    <property type="match status" value="1"/>
</dbReference>
<dbReference type="FunFam" id="1.10.8.50:FF:000003">
    <property type="entry name" value="Formamidopyrimidine-DNA glycosylase"/>
    <property type="match status" value="1"/>
</dbReference>
<dbReference type="Gene3D" id="1.10.8.50">
    <property type="match status" value="1"/>
</dbReference>
<dbReference type="Gene3D" id="3.20.190.10">
    <property type="entry name" value="MutM-like, N-terminal"/>
    <property type="match status" value="1"/>
</dbReference>
<dbReference type="HAMAP" id="MF_00103">
    <property type="entry name" value="Fapy_DNA_glycosyl"/>
    <property type="match status" value="1"/>
</dbReference>
<dbReference type="InterPro" id="IPR015886">
    <property type="entry name" value="DNA_glyclase/AP_lyase_DNA-bd"/>
</dbReference>
<dbReference type="InterPro" id="IPR020629">
    <property type="entry name" value="Formamido-pyr_DNA_Glyclase"/>
</dbReference>
<dbReference type="InterPro" id="IPR012319">
    <property type="entry name" value="FPG_cat"/>
</dbReference>
<dbReference type="InterPro" id="IPR035937">
    <property type="entry name" value="MutM-like_N-ter"/>
</dbReference>
<dbReference type="InterPro" id="IPR010979">
    <property type="entry name" value="Ribosomal_uS13-like_H2TH"/>
</dbReference>
<dbReference type="InterPro" id="IPR000214">
    <property type="entry name" value="Znf_DNA_glyclase/AP_lyase"/>
</dbReference>
<dbReference type="NCBIfam" id="TIGR00577">
    <property type="entry name" value="fpg"/>
    <property type="match status" value="1"/>
</dbReference>
<dbReference type="NCBIfam" id="NF002211">
    <property type="entry name" value="PRK01103.1"/>
    <property type="match status" value="1"/>
</dbReference>
<dbReference type="PANTHER" id="PTHR22993">
    <property type="entry name" value="FORMAMIDOPYRIMIDINE-DNA GLYCOSYLASE"/>
    <property type="match status" value="1"/>
</dbReference>
<dbReference type="PANTHER" id="PTHR22993:SF9">
    <property type="entry name" value="FORMAMIDOPYRIMIDINE-DNA GLYCOSYLASE"/>
    <property type="match status" value="1"/>
</dbReference>
<dbReference type="Pfam" id="PF01149">
    <property type="entry name" value="Fapy_DNA_glyco"/>
    <property type="match status" value="1"/>
</dbReference>
<dbReference type="Pfam" id="PF06831">
    <property type="entry name" value="H2TH"/>
    <property type="match status" value="1"/>
</dbReference>
<dbReference type="SMART" id="SM00898">
    <property type="entry name" value="Fapy_DNA_glyco"/>
    <property type="match status" value="1"/>
</dbReference>
<dbReference type="SMART" id="SM01232">
    <property type="entry name" value="H2TH"/>
    <property type="match status" value="1"/>
</dbReference>
<dbReference type="SUPFAM" id="SSF57716">
    <property type="entry name" value="Glucocorticoid receptor-like (DNA-binding domain)"/>
    <property type="match status" value="1"/>
</dbReference>
<dbReference type="SUPFAM" id="SSF81624">
    <property type="entry name" value="N-terminal domain of MutM-like DNA repair proteins"/>
    <property type="match status" value="1"/>
</dbReference>
<dbReference type="SUPFAM" id="SSF46946">
    <property type="entry name" value="S13-like H2TH domain"/>
    <property type="match status" value="1"/>
</dbReference>
<dbReference type="PROSITE" id="PS51068">
    <property type="entry name" value="FPG_CAT"/>
    <property type="match status" value="1"/>
</dbReference>
<dbReference type="PROSITE" id="PS51066">
    <property type="entry name" value="ZF_FPG_2"/>
    <property type="match status" value="1"/>
</dbReference>
<keyword id="KW-0227">DNA damage</keyword>
<keyword id="KW-0234">DNA repair</keyword>
<keyword id="KW-0238">DNA-binding</keyword>
<keyword id="KW-0326">Glycosidase</keyword>
<keyword id="KW-0378">Hydrolase</keyword>
<keyword id="KW-0456">Lyase</keyword>
<keyword id="KW-0479">Metal-binding</keyword>
<keyword id="KW-0511">Multifunctional enzyme</keyword>
<keyword id="KW-0862">Zinc</keyword>
<keyword id="KW-0863">Zinc-finger</keyword>
<comment type="function">
    <text evidence="2">Involved in base excision repair of DNA damaged by oxidation or by mutagenic agents. Acts as a DNA glycosylase that recognizes and removes damaged bases. Has a preference for oxidized purines, such as 7,8-dihydro-8-oxoguanine (8-oxoG). Has AP (apurinic/apyrimidinic) lyase activity and introduces nicks in the DNA strand. Cleaves the DNA backbone by beta-delta elimination to generate a single-strand break at the site of the removed base with both 3'- and 5'-phosphates.</text>
</comment>
<comment type="catalytic activity">
    <reaction evidence="2">
        <text>Hydrolysis of DNA containing ring-opened 7-methylguanine residues, releasing 2,6-diamino-4-hydroxy-5-(N-methyl)formamidopyrimidine.</text>
        <dbReference type="EC" id="3.2.2.23"/>
    </reaction>
</comment>
<comment type="catalytic activity">
    <reaction evidence="2">
        <text>2'-deoxyribonucleotide-(2'-deoxyribose 5'-phosphate)-2'-deoxyribonucleotide-DNA = a 3'-end 2'-deoxyribonucleotide-(2,3-dehydro-2,3-deoxyribose 5'-phosphate)-DNA + a 5'-end 5'-phospho-2'-deoxyribonucleoside-DNA + H(+)</text>
        <dbReference type="Rhea" id="RHEA:66592"/>
        <dbReference type="Rhea" id="RHEA-COMP:13180"/>
        <dbReference type="Rhea" id="RHEA-COMP:16897"/>
        <dbReference type="Rhea" id="RHEA-COMP:17067"/>
        <dbReference type="ChEBI" id="CHEBI:15378"/>
        <dbReference type="ChEBI" id="CHEBI:136412"/>
        <dbReference type="ChEBI" id="CHEBI:157695"/>
        <dbReference type="ChEBI" id="CHEBI:167181"/>
        <dbReference type="EC" id="4.2.99.18"/>
    </reaction>
</comment>
<comment type="cofactor">
    <cofactor evidence="2">
        <name>Zn(2+)</name>
        <dbReference type="ChEBI" id="CHEBI:29105"/>
    </cofactor>
    <text evidence="2">Binds 1 zinc ion per subunit.</text>
</comment>
<comment type="subunit">
    <text evidence="2">Monomer.</text>
</comment>
<comment type="similarity">
    <text evidence="2">Belongs to the FPG family.</text>
</comment>
<name>FPG_PARS2</name>
<organism>
    <name type="scientific">Parafrankia sp. (strain EAN1pec)</name>
    <dbReference type="NCBI Taxonomy" id="298653"/>
    <lineage>
        <taxon>Bacteria</taxon>
        <taxon>Bacillati</taxon>
        <taxon>Actinomycetota</taxon>
        <taxon>Actinomycetes</taxon>
        <taxon>Frankiales</taxon>
        <taxon>Frankiaceae</taxon>
        <taxon>Parafrankia</taxon>
    </lineage>
</organism>